<accession>B1IBR5</accession>
<reference key="1">
    <citation type="journal article" date="2010" name="Genome Biol.">
        <title>Structure and dynamics of the pan-genome of Streptococcus pneumoniae and closely related species.</title>
        <authorList>
            <person name="Donati C."/>
            <person name="Hiller N.L."/>
            <person name="Tettelin H."/>
            <person name="Muzzi A."/>
            <person name="Croucher N.J."/>
            <person name="Angiuoli S.V."/>
            <person name="Oggioni M."/>
            <person name="Dunning Hotopp J.C."/>
            <person name="Hu F.Z."/>
            <person name="Riley D.R."/>
            <person name="Covacci A."/>
            <person name="Mitchell T.J."/>
            <person name="Bentley S.D."/>
            <person name="Kilian M."/>
            <person name="Ehrlich G.D."/>
            <person name="Rappuoli R."/>
            <person name="Moxon E.R."/>
            <person name="Masignani V."/>
        </authorList>
    </citation>
    <scope>NUCLEOTIDE SEQUENCE [LARGE SCALE GENOMIC DNA]</scope>
    <source>
        <strain>Hungary19A-6</strain>
    </source>
</reference>
<sequence>MKLLYTDIRTSLTEILTREAEELVAAGKRVFYIAPNSLSFEKERAVLEYLSQQASFSITVTRFAQMARYLVLNDLPAKTTLDDIGLGLAFYKCLAELDPKDLRVYGAIKQDPQLIQQLIELYHEMTKSQMSFLDLENLTDEDKRADLLLIFEKVTAYLNQGQLAQGSQLSHLIEAIENDKVSSDFNQIALVIDGFTRFSAEEERVVDLLHGKGVEIVIGAYASKKAYTSPFSEGNLYQASVKFLHHLASKYQTPAQDCSQTHEKMDSFDKASRLLESSYDFSELALDVDEKDRENLQIWSCLTQKEELELVARSIRQKLHENSDLSYKHFRILLGDVASYQLSLKTIFDQYQIPFYLGRSEAMAHHPLTQFVESILALKRYRFRQEDLINLLRTDLYTDLSQSDIDAFEQYIRYLGINGLPAFQQTFTKSHHGKFNLERLNVLRLRILAPLETLFASRKQKAENLLQKWSVFLKEGAVTKQLQDLTTTLEAVEQERQTEVWKAFCHVLEQFATVFAGSQVSLEDFLALLHSGMSLSQYRTIPATVDTVLVQSYDLIAPLTADFVYAIGLTQDNLPKISQNTSLLTDEERQNLNQTTEEGVQLLIASSENLKKNRYTMLSLVNSARKQLFLSAPSLFNESESKESAYLQELIHFGFRRREKRMNHKGLSKEDMGSYHSLLSSLVAYHQQGEMSDTEQDLTFVKVLSRVIGKKLDLQGLENPAIPTSPSSKTLTKDTLQALYPAKQEFYLSTSGLTEFYLNEYSYFLRYVLGLQEELRLRPDARSHGNFLHRIFERALQLPNEDSFDQRLEQAIQETSQEREFEAIYQESLEAQFTKEVLLDVARTTGHILRHNPAIETIKEEANFGGKDQAFIQLDNGRSVFVRGKVDRIDRLKANGAIGVVDYKSSLTQFQFPHFFNGLNSQLPTYLAALKREGEQNFFGAMYLEMAEPVQSLMAVKSLAGAVVEASKSMKYQGLFLEKESSYLGEFYNKNKANQLTDEEFQLLLDYNAYLYKKAAEKILAGRFAINPYTENGRSIAPYVQQHQAITGFEANYHLGQARFLEKLDLADGKRLVGEKLKQAWLEKIREELNR</sequence>
<keyword id="KW-0067">ATP-binding</keyword>
<keyword id="KW-0227">DNA damage</keyword>
<keyword id="KW-0234">DNA repair</keyword>
<keyword id="KW-0238">DNA-binding</keyword>
<keyword id="KW-0269">Exonuclease</keyword>
<keyword id="KW-0347">Helicase</keyword>
<keyword id="KW-0378">Hydrolase</keyword>
<keyword id="KW-0540">Nuclease</keyword>
<keyword id="KW-0547">Nucleotide-binding</keyword>
<comment type="function">
    <text evidence="1">The heterodimer acts as both an ATP-dependent DNA helicase and an ATP-dependent, dual-direction single-stranded exonuclease. Recognizes the chi site generating a DNA molecule suitable for the initiation of homologous recombination. This subunit has 5' -&gt; 3' nuclease activity but not helicase activity.</text>
</comment>
<comment type="cofactor">
    <cofactor evidence="1">
        <name>Mg(2+)</name>
        <dbReference type="ChEBI" id="CHEBI:18420"/>
    </cofactor>
</comment>
<comment type="subunit">
    <text evidence="1">Heterodimer of AddA and RexB.</text>
</comment>
<comment type="miscellaneous">
    <text evidence="1">Despite having helicase-like domains, this subunit does not have helicase activity.</text>
</comment>
<comment type="similarity">
    <text evidence="1">Belongs to the helicase family. AddB/RexB type 2 subfamily.</text>
</comment>
<feature type="chain" id="PRO_0000379398" description="ATP-dependent helicase/deoxyribonuclease subunit B">
    <location>
        <begin position="1"/>
        <end position="1091"/>
    </location>
</feature>
<proteinExistence type="inferred from homology"/>
<protein>
    <recommendedName>
        <fullName evidence="1">ATP-dependent helicase/deoxyribonuclease subunit B</fullName>
        <ecNumber evidence="1">3.1.-.-</ecNumber>
    </recommendedName>
    <alternativeName>
        <fullName evidence="1">ATP-dependent helicase/nuclease subunit RexB</fullName>
    </alternativeName>
</protein>
<organism>
    <name type="scientific">Streptococcus pneumoniae (strain Hungary19A-6)</name>
    <dbReference type="NCBI Taxonomy" id="487214"/>
    <lineage>
        <taxon>Bacteria</taxon>
        <taxon>Bacillati</taxon>
        <taxon>Bacillota</taxon>
        <taxon>Bacilli</taxon>
        <taxon>Lactobacillales</taxon>
        <taxon>Streptococcaceae</taxon>
        <taxon>Streptococcus</taxon>
    </lineage>
</organism>
<gene>
    <name evidence="1" type="primary">rexB</name>
    <name type="ordered locus">SPH_1225</name>
</gene>
<dbReference type="EC" id="3.1.-.-" evidence="1"/>
<dbReference type="EMBL" id="CP000936">
    <property type="protein sequence ID" value="ACA36414.1"/>
    <property type="molecule type" value="Genomic_DNA"/>
</dbReference>
<dbReference type="RefSeq" id="WP_000772379.1">
    <property type="nucleotide sequence ID" value="NC_010380.1"/>
</dbReference>
<dbReference type="SMR" id="B1IBR5"/>
<dbReference type="KEGG" id="spv:SPH_1225"/>
<dbReference type="HOGENOM" id="CLU_007838_0_0_9"/>
<dbReference type="Proteomes" id="UP000002163">
    <property type="component" value="Chromosome"/>
</dbReference>
<dbReference type="GO" id="GO:0008409">
    <property type="term" value="F:5'-3' exonuclease activity"/>
    <property type="evidence" value="ECO:0007669"/>
    <property type="project" value="UniProtKB-UniRule"/>
</dbReference>
<dbReference type="GO" id="GO:0005524">
    <property type="term" value="F:ATP binding"/>
    <property type="evidence" value="ECO:0007669"/>
    <property type="project" value="UniProtKB-UniRule"/>
</dbReference>
<dbReference type="GO" id="GO:0003690">
    <property type="term" value="F:double-stranded DNA binding"/>
    <property type="evidence" value="ECO:0007669"/>
    <property type="project" value="UniProtKB-UniRule"/>
</dbReference>
<dbReference type="GO" id="GO:0004386">
    <property type="term" value="F:helicase activity"/>
    <property type="evidence" value="ECO:0007669"/>
    <property type="project" value="UniProtKB-KW"/>
</dbReference>
<dbReference type="GO" id="GO:0016817">
    <property type="term" value="F:hydrolase activity, acting on acid anhydrides"/>
    <property type="evidence" value="ECO:0007669"/>
    <property type="project" value="InterPro"/>
</dbReference>
<dbReference type="GO" id="GO:0000724">
    <property type="term" value="P:double-strand break repair via homologous recombination"/>
    <property type="evidence" value="ECO:0007669"/>
    <property type="project" value="UniProtKB-UniRule"/>
</dbReference>
<dbReference type="FunFam" id="3.40.50.300:FF:002666">
    <property type="entry name" value="ATP-dependent helicase/deoxyribonuclease subunit B"/>
    <property type="match status" value="1"/>
</dbReference>
<dbReference type="FunFam" id="3.40.50.300:FF:002815">
    <property type="entry name" value="ATP-dependent helicase/deoxyribonuclease subunit B"/>
    <property type="match status" value="1"/>
</dbReference>
<dbReference type="Gene3D" id="3.40.50.300">
    <property type="entry name" value="P-loop containing nucleotide triphosphate hydrolases"/>
    <property type="match status" value="4"/>
</dbReference>
<dbReference type="HAMAP" id="MF_01453">
    <property type="entry name" value="AddB_type2"/>
    <property type="match status" value="1"/>
</dbReference>
<dbReference type="InterPro" id="IPR049035">
    <property type="entry name" value="ADDB_N"/>
</dbReference>
<dbReference type="InterPro" id="IPR014141">
    <property type="entry name" value="DNA_helicase_suRexB"/>
</dbReference>
<dbReference type="InterPro" id="IPR027417">
    <property type="entry name" value="P-loop_NTPase"/>
</dbReference>
<dbReference type="InterPro" id="IPR038726">
    <property type="entry name" value="PDDEXK_AddAB-type"/>
</dbReference>
<dbReference type="InterPro" id="IPR011335">
    <property type="entry name" value="Restrct_endonuc-II-like"/>
</dbReference>
<dbReference type="NCBIfam" id="TIGR02774">
    <property type="entry name" value="rexB_recomb"/>
    <property type="match status" value="1"/>
</dbReference>
<dbReference type="PANTHER" id="PTHR30591">
    <property type="entry name" value="RECBCD ENZYME SUBUNIT RECC"/>
    <property type="match status" value="1"/>
</dbReference>
<dbReference type="PANTHER" id="PTHR30591:SF1">
    <property type="entry name" value="RECBCD ENZYME SUBUNIT RECC"/>
    <property type="match status" value="1"/>
</dbReference>
<dbReference type="Pfam" id="PF21445">
    <property type="entry name" value="ADDB_N"/>
    <property type="match status" value="1"/>
</dbReference>
<dbReference type="Pfam" id="PF12705">
    <property type="entry name" value="PDDEXK_1"/>
    <property type="match status" value="1"/>
</dbReference>
<dbReference type="SUPFAM" id="SSF52540">
    <property type="entry name" value="P-loop containing nucleoside triphosphate hydrolases"/>
    <property type="match status" value="1"/>
</dbReference>
<dbReference type="SUPFAM" id="SSF52980">
    <property type="entry name" value="Restriction endonuclease-like"/>
    <property type="match status" value="1"/>
</dbReference>
<evidence type="ECO:0000255" key="1">
    <source>
        <dbReference type="HAMAP-Rule" id="MF_01453"/>
    </source>
</evidence>
<name>ADDB_STRPI</name>